<keyword id="KW-0025">Alternative splicing</keyword>
<keyword id="KW-0067">ATP-binding</keyword>
<keyword id="KW-0274">FAD</keyword>
<keyword id="KW-0285">Flavoprotein</keyword>
<keyword id="KW-0288">FMN</keyword>
<keyword id="KW-0547">Nucleotide-binding</keyword>
<keyword id="KW-0548">Nucleotidyltransferase</keyword>
<keyword id="KW-1185">Reference proteome</keyword>
<keyword id="KW-0808">Transferase</keyword>
<comment type="function">
    <text evidence="1">Catalyzes the adenylation of flavin mononucleotide (FMN) to form flavin adenine dinucleotide (FAD) coenzyme.</text>
</comment>
<comment type="catalytic activity">
    <reaction>
        <text>FMN + ATP + H(+) = FAD + diphosphate</text>
        <dbReference type="Rhea" id="RHEA:17237"/>
        <dbReference type="ChEBI" id="CHEBI:15378"/>
        <dbReference type="ChEBI" id="CHEBI:30616"/>
        <dbReference type="ChEBI" id="CHEBI:33019"/>
        <dbReference type="ChEBI" id="CHEBI:57692"/>
        <dbReference type="ChEBI" id="CHEBI:58210"/>
        <dbReference type="EC" id="2.7.7.2"/>
    </reaction>
</comment>
<comment type="cofactor">
    <cofactor evidence="1">
        <name>Mg(2+)</name>
        <dbReference type="ChEBI" id="CHEBI:18420"/>
    </cofactor>
</comment>
<comment type="pathway">
    <text>Cofactor biosynthesis; FAD biosynthesis; FAD from FMN: step 1/1.</text>
</comment>
<comment type="alternative products">
    <event type="alternative splicing"/>
    <isoform>
        <id>Q22017-1</id>
        <name>a</name>
        <sequence type="displayed"/>
    </isoform>
    <isoform>
        <id>Q22017-2</id>
        <name>b</name>
        <sequence type="described" ref="VSP_027956"/>
    </isoform>
</comment>
<comment type="domain">
    <text>The molybdenum cofactor biosynthesis protein-like region may not be functional.</text>
</comment>
<comment type="similarity">
    <text evidence="2">In the N-terminal section; belongs to the MoaB/Mog family.</text>
</comment>
<comment type="similarity">
    <text evidence="2">In the C-terminal section; belongs to the PAPS reductase family. FAD1 subfamily.</text>
</comment>
<name>FAD1_CAEEL</name>
<feature type="chain" id="PRO_0000302743" description="Probable FAD synthase">
    <location>
        <begin position="1"/>
        <end position="519"/>
    </location>
</feature>
<feature type="region of interest" description="Molybdenum cofactor biosynthesis protein-like">
    <location>
        <begin position="17"/>
        <end position="108"/>
    </location>
</feature>
<feature type="region of interest" description="FAD synthase">
    <location>
        <begin position="328"/>
        <end position="485"/>
    </location>
</feature>
<feature type="splice variant" id="VSP_027956" description="In isoform b." evidence="2">
    <location>
        <begin position="1"/>
        <end position="9"/>
    </location>
</feature>
<accession>Q22017</accession>
<accession>Q58AA6</accession>
<evidence type="ECO:0000250" key="1"/>
<evidence type="ECO:0000305" key="2"/>
<evidence type="ECO:0000312" key="3">
    <source>
        <dbReference type="WormBase" id="R53.1a"/>
    </source>
</evidence>
<proteinExistence type="inferred from homology"/>
<gene>
    <name evidence="3" type="primary">flad-1</name>
    <name evidence="3" type="ORF">R53.1</name>
</gene>
<protein>
    <recommendedName>
        <fullName>Probable FAD synthase</fullName>
        <ecNumber>2.7.7.2</ecNumber>
    </recommendedName>
    <alternativeName>
        <fullName>FAD pyrophosphorylase</fullName>
    </alternativeName>
    <alternativeName>
        <fullName>FMN adenylyltransferase</fullName>
    </alternativeName>
    <alternativeName>
        <fullName>Flavin adenine dinucleotide synthase</fullName>
    </alternativeName>
    <domain>
        <recommendedName>
            <fullName>Molybdenum cofactor biosynthesis protein-like region</fullName>
        </recommendedName>
    </domain>
    <domain>
        <recommendedName>
            <fullName>FAD synthase region</fullName>
        </recommendedName>
    </domain>
</protein>
<organism>
    <name type="scientific">Caenorhabditis elegans</name>
    <dbReference type="NCBI Taxonomy" id="6239"/>
    <lineage>
        <taxon>Eukaryota</taxon>
        <taxon>Metazoa</taxon>
        <taxon>Ecdysozoa</taxon>
        <taxon>Nematoda</taxon>
        <taxon>Chromadorea</taxon>
        <taxon>Rhabditida</taxon>
        <taxon>Rhabditina</taxon>
        <taxon>Rhabditomorpha</taxon>
        <taxon>Rhabditoidea</taxon>
        <taxon>Rhabditidae</taxon>
        <taxon>Peloderinae</taxon>
        <taxon>Caenorhabditis</taxon>
    </lineage>
</organism>
<sequence>MRAMFRTPRMPQRKTAAILVIGDEILKGTTRDTNSHFLCKRLHKLGVNIRKISVIGDDISEISREVQSASGAYDYVITSGGVGPTHDDKTYLGLAHAFTDQMQFSDEIRQAVNRFLPTYTAKKRAEGVGEGLEEAVRLATEKLCTIPKMSQLLWGTQKINGSLSTFPVVRISNVVALPGVPKFCERAFDELQDQLFPIEERQSLCFETLYTDLDEFDFSKKLTDLAAQFEDRNVQIGSYPELKNKFFKTKLTIETESSETMEAVVTSLRELLAGHIVYYDSHAWLDIVTKWKAFKKRKASENQIEFIQKLNEAESIVEEIVEKYPLEQIALSFNGGKDCTVLLHLLRLKVDEKYGPSTPIQGFHIMVEDQFPEATQFIIDAAKFYNIQVLEFPGPLKTGLAALKKTRPSIIPVLMGSRATDPNGKYMKTPVEWTDSDWPQVLRVCPILNWTYTDVWHMLRGLCVPYCKLYDQGYTSLGGRDNTVKHPALRIVSSDGREHYLPAYKLHNDAEERCNRSNI</sequence>
<dbReference type="EC" id="2.7.7.2"/>
<dbReference type="EMBL" id="Z66515">
    <property type="protein sequence ID" value="CAA91346.1"/>
    <property type="molecule type" value="Genomic_DNA"/>
</dbReference>
<dbReference type="EMBL" id="Z66515">
    <property type="protein sequence ID" value="CAI70410.1"/>
    <property type="molecule type" value="Genomic_DNA"/>
</dbReference>
<dbReference type="PIR" id="T24243">
    <property type="entry name" value="T24243"/>
</dbReference>
<dbReference type="RefSeq" id="NP_001022286.1">
    <molecule id="Q22017-1"/>
    <property type="nucleotide sequence ID" value="NM_001027115.3"/>
</dbReference>
<dbReference type="RefSeq" id="NP_001022287.1">
    <molecule id="Q22017-2"/>
    <property type="nucleotide sequence ID" value="NM_001027116.5"/>
</dbReference>
<dbReference type="SMR" id="Q22017"/>
<dbReference type="BioGRID" id="532348">
    <property type="interactions" value="1"/>
</dbReference>
<dbReference type="FunCoup" id="Q22017">
    <property type="interactions" value="1456"/>
</dbReference>
<dbReference type="STRING" id="6239.R53.1a.2"/>
<dbReference type="PaxDb" id="6239-R53.1a.2"/>
<dbReference type="PeptideAtlas" id="Q22017"/>
<dbReference type="EnsemblMetazoa" id="R53.1a.1">
    <molecule id="Q22017-1"/>
    <property type="protein sequence ID" value="R53.1a.1"/>
    <property type="gene ID" value="WBGene00011271"/>
</dbReference>
<dbReference type="EnsemblMetazoa" id="R53.1b.1">
    <molecule id="Q22017-2"/>
    <property type="protein sequence ID" value="R53.1b.1"/>
    <property type="gene ID" value="WBGene00011271"/>
</dbReference>
<dbReference type="GeneID" id="3565030"/>
<dbReference type="KEGG" id="cel:CELE_R53.1"/>
<dbReference type="UCSC" id="R53.1a.1">
    <molecule id="Q22017-1"/>
    <property type="organism name" value="c. elegans"/>
</dbReference>
<dbReference type="AGR" id="WB:WBGene00011271"/>
<dbReference type="CTD" id="3565030"/>
<dbReference type="WormBase" id="R53.1a">
    <molecule id="Q22017-1"/>
    <property type="protein sequence ID" value="CE02303"/>
    <property type="gene ID" value="WBGene00011271"/>
    <property type="gene designation" value="flad-1"/>
</dbReference>
<dbReference type="WormBase" id="R53.1b">
    <molecule id="Q22017-2"/>
    <property type="protein sequence ID" value="CE38215"/>
    <property type="gene ID" value="WBGene00011271"/>
    <property type="gene designation" value="flad-1"/>
</dbReference>
<dbReference type="eggNOG" id="KOG2644">
    <property type="taxonomic scope" value="Eukaryota"/>
</dbReference>
<dbReference type="GeneTree" id="ENSGT00390000007266"/>
<dbReference type="InParanoid" id="Q22017"/>
<dbReference type="OMA" id="NSHFLCK"/>
<dbReference type="OrthoDB" id="270728at2759"/>
<dbReference type="PhylomeDB" id="Q22017"/>
<dbReference type="Reactome" id="R-CEL-196843">
    <property type="pathway name" value="Vitamin B2 (riboflavin) metabolism"/>
</dbReference>
<dbReference type="UniPathway" id="UPA00277">
    <property type="reaction ID" value="UER00407"/>
</dbReference>
<dbReference type="PRO" id="PR:Q22017"/>
<dbReference type="Proteomes" id="UP000001940">
    <property type="component" value="Chromosome II"/>
</dbReference>
<dbReference type="Bgee" id="WBGene00011271">
    <property type="expression patterns" value="Expressed in germ line (C elegans) and 4 other cell types or tissues"/>
</dbReference>
<dbReference type="ExpressionAtlas" id="Q22017">
    <property type="expression patterns" value="baseline and differential"/>
</dbReference>
<dbReference type="GO" id="GO:0005524">
    <property type="term" value="F:ATP binding"/>
    <property type="evidence" value="ECO:0007669"/>
    <property type="project" value="UniProtKB-KW"/>
</dbReference>
<dbReference type="GO" id="GO:0003919">
    <property type="term" value="F:FMN adenylyltransferase activity"/>
    <property type="evidence" value="ECO:0000318"/>
    <property type="project" value="GO_Central"/>
</dbReference>
<dbReference type="GO" id="GO:0006747">
    <property type="term" value="P:FAD biosynthetic process"/>
    <property type="evidence" value="ECO:0000318"/>
    <property type="project" value="GO_Central"/>
</dbReference>
<dbReference type="CDD" id="cd00885">
    <property type="entry name" value="cinA"/>
    <property type="match status" value="1"/>
</dbReference>
<dbReference type="CDD" id="cd23948">
    <property type="entry name" value="FAD_synthase"/>
    <property type="match status" value="1"/>
</dbReference>
<dbReference type="FunFam" id="3.40.50.620:FF:000445">
    <property type="entry name" value="Probable FAD synthase"/>
    <property type="match status" value="1"/>
</dbReference>
<dbReference type="FunFam" id="3.40.980.10:FF:000024">
    <property type="entry name" value="Probable FAD synthase"/>
    <property type="match status" value="1"/>
</dbReference>
<dbReference type="Gene3D" id="3.40.50.620">
    <property type="entry name" value="HUPs"/>
    <property type="match status" value="1"/>
</dbReference>
<dbReference type="Gene3D" id="3.40.980.10">
    <property type="entry name" value="MoaB/Mog-like domain"/>
    <property type="match status" value="1"/>
</dbReference>
<dbReference type="InterPro" id="IPR012183">
    <property type="entry name" value="FAD_synth_MoaB/Mog-bd"/>
</dbReference>
<dbReference type="InterPro" id="IPR056596">
    <property type="entry name" value="FLAD1_M"/>
</dbReference>
<dbReference type="InterPro" id="IPR036425">
    <property type="entry name" value="MoaB/Mog-like_dom_sf"/>
</dbReference>
<dbReference type="InterPro" id="IPR001453">
    <property type="entry name" value="MoaB/Mog_dom"/>
</dbReference>
<dbReference type="InterPro" id="IPR002500">
    <property type="entry name" value="PAPS_reduct_dom"/>
</dbReference>
<dbReference type="InterPro" id="IPR014729">
    <property type="entry name" value="Rossmann-like_a/b/a_fold"/>
</dbReference>
<dbReference type="PANTHER" id="PTHR23293:SF9">
    <property type="entry name" value="FAD SYNTHASE"/>
    <property type="match status" value="1"/>
</dbReference>
<dbReference type="PANTHER" id="PTHR23293">
    <property type="entry name" value="FAD SYNTHETASE-RELATED FMN ADENYLYLTRANSFERASE"/>
    <property type="match status" value="1"/>
</dbReference>
<dbReference type="Pfam" id="PF24102">
    <property type="entry name" value="FLAD1_M"/>
    <property type="match status" value="1"/>
</dbReference>
<dbReference type="Pfam" id="PF00994">
    <property type="entry name" value="MoCF_biosynth"/>
    <property type="match status" value="1"/>
</dbReference>
<dbReference type="Pfam" id="PF01507">
    <property type="entry name" value="PAPS_reduct"/>
    <property type="match status" value="1"/>
</dbReference>
<dbReference type="PIRSF" id="PIRSF036620">
    <property type="entry name" value="MPTbdFAD"/>
    <property type="match status" value="1"/>
</dbReference>
<dbReference type="SMART" id="SM00852">
    <property type="entry name" value="MoCF_biosynth"/>
    <property type="match status" value="1"/>
</dbReference>
<dbReference type="SUPFAM" id="SSF52402">
    <property type="entry name" value="Adenine nucleotide alpha hydrolases-like"/>
    <property type="match status" value="1"/>
</dbReference>
<dbReference type="SUPFAM" id="SSF53218">
    <property type="entry name" value="Molybdenum cofactor biosynthesis proteins"/>
    <property type="match status" value="1"/>
</dbReference>
<reference key="1">
    <citation type="journal article" date="1998" name="Science">
        <title>Genome sequence of the nematode C. elegans: a platform for investigating biology.</title>
        <authorList>
            <consortium name="The C. elegans sequencing consortium"/>
        </authorList>
    </citation>
    <scope>NUCLEOTIDE SEQUENCE [LARGE SCALE GENOMIC DNA]</scope>
    <scope>ALTERNATIVE SPLICING</scope>
    <source>
        <strain>Bristol N2</strain>
    </source>
</reference>